<keyword id="KW-0406">Ion transport</keyword>
<keyword id="KW-0408">Iron</keyword>
<keyword id="KW-0410">Iron transport</keyword>
<keyword id="KW-0472">Membrane</keyword>
<keyword id="KW-1185">Reference proteome</keyword>
<keyword id="KW-0812">Transmembrane</keyword>
<keyword id="KW-1133">Transmembrane helix</keyword>
<keyword id="KW-0813">Transport</keyword>
<keyword id="KW-0926">Vacuole</keyword>
<evidence type="ECO:0000255" key="1"/>
<evidence type="ECO:0000269" key="2">
    <source>
    </source>
</evidence>
<evidence type="ECO:0000269" key="3">
    <source>
    </source>
</evidence>
<evidence type="ECO:0000269" key="4">
    <source>
    </source>
</evidence>
<evidence type="ECO:0000303" key="5">
    <source>
    </source>
</evidence>
<evidence type="ECO:0000303" key="6">
    <source>
    </source>
</evidence>
<evidence type="ECO:0000305" key="7"/>
<evidence type="ECO:0000312" key="8">
    <source>
        <dbReference type="Araport" id="AT1G76800"/>
    </source>
</evidence>
<evidence type="ECO:0000312" key="9">
    <source>
        <dbReference type="EMBL" id="AAF04441.1"/>
    </source>
</evidence>
<dbReference type="EMBL" id="AC010718">
    <property type="protein sequence ID" value="AAF04441.1"/>
    <property type="molecule type" value="Genomic_DNA"/>
</dbReference>
<dbReference type="EMBL" id="CP002684">
    <property type="protein sequence ID" value="AEE35890.1"/>
    <property type="molecule type" value="Genomic_DNA"/>
</dbReference>
<dbReference type="EMBL" id="BT014942">
    <property type="protein sequence ID" value="AAT47793.1"/>
    <property type="molecule type" value="mRNA"/>
</dbReference>
<dbReference type="EMBL" id="BT015634">
    <property type="protein sequence ID" value="AAU15133.1"/>
    <property type="molecule type" value="mRNA"/>
</dbReference>
<dbReference type="PIR" id="F96796">
    <property type="entry name" value="F96796"/>
</dbReference>
<dbReference type="RefSeq" id="NP_177806.1">
    <property type="nucleotide sequence ID" value="NM_106330.4"/>
</dbReference>
<dbReference type="SMR" id="Q9SRD3"/>
<dbReference type="STRING" id="3702.Q9SRD3"/>
<dbReference type="TCDB" id="2.A.89.3.4">
    <property type="family name" value="the vacuolar iron transporter (vit) family"/>
</dbReference>
<dbReference type="GlyGen" id="Q9SRD3">
    <property type="glycosylation" value="1 site"/>
</dbReference>
<dbReference type="PaxDb" id="3702-AT1G76800.1"/>
<dbReference type="ProteomicsDB" id="228609"/>
<dbReference type="EnsemblPlants" id="AT1G76800.1">
    <property type="protein sequence ID" value="AT1G76800.1"/>
    <property type="gene ID" value="AT1G76800"/>
</dbReference>
<dbReference type="GeneID" id="844014"/>
<dbReference type="Gramene" id="AT1G76800.1">
    <property type="protein sequence ID" value="AT1G76800.1"/>
    <property type="gene ID" value="AT1G76800"/>
</dbReference>
<dbReference type="KEGG" id="ath:AT1G76800"/>
<dbReference type="Araport" id="AT1G76800"/>
<dbReference type="TAIR" id="AT1G76800">
    <property type="gene designation" value="VTL2"/>
</dbReference>
<dbReference type="eggNOG" id="KOG4473">
    <property type="taxonomic scope" value="Eukaryota"/>
</dbReference>
<dbReference type="HOGENOM" id="CLU_038957_5_1_1"/>
<dbReference type="InParanoid" id="Q9SRD3"/>
<dbReference type="OMA" id="DIWNIAY"/>
<dbReference type="OrthoDB" id="73465at2759"/>
<dbReference type="PhylomeDB" id="Q9SRD3"/>
<dbReference type="PRO" id="PR:Q9SRD3"/>
<dbReference type="Proteomes" id="UP000006548">
    <property type="component" value="Chromosome 1"/>
</dbReference>
<dbReference type="ExpressionAtlas" id="Q9SRD3">
    <property type="expression patterns" value="baseline and differential"/>
</dbReference>
<dbReference type="GO" id="GO:0005774">
    <property type="term" value="C:vacuolar membrane"/>
    <property type="evidence" value="ECO:0000314"/>
    <property type="project" value="UniProtKB"/>
</dbReference>
<dbReference type="GO" id="GO:0005381">
    <property type="term" value="F:iron ion transmembrane transporter activity"/>
    <property type="evidence" value="ECO:0000315"/>
    <property type="project" value="UniProtKB"/>
</dbReference>
<dbReference type="GO" id="GO:0005384">
    <property type="term" value="F:manganese ion transmembrane transporter activity"/>
    <property type="evidence" value="ECO:0007669"/>
    <property type="project" value="InterPro"/>
</dbReference>
<dbReference type="GO" id="GO:0006879">
    <property type="term" value="P:intracellular iron ion homeostasis"/>
    <property type="evidence" value="ECO:0000314"/>
    <property type="project" value="UniProtKB"/>
</dbReference>
<dbReference type="GO" id="GO:0030026">
    <property type="term" value="P:intracellular manganese ion homeostasis"/>
    <property type="evidence" value="ECO:0007669"/>
    <property type="project" value="InterPro"/>
</dbReference>
<dbReference type="GO" id="GO:0010039">
    <property type="term" value="P:response to iron ion"/>
    <property type="evidence" value="ECO:0000270"/>
    <property type="project" value="TAIR"/>
</dbReference>
<dbReference type="InterPro" id="IPR008217">
    <property type="entry name" value="Ccc1_fam"/>
</dbReference>
<dbReference type="PANTHER" id="PTHR31851">
    <property type="entry name" value="FE(2+)/MN(2+) TRANSPORTER PCL1"/>
    <property type="match status" value="1"/>
</dbReference>
<dbReference type="Pfam" id="PF01988">
    <property type="entry name" value="VIT1"/>
    <property type="match status" value="2"/>
</dbReference>
<gene>
    <name evidence="6" type="primary">VTL2</name>
    <name evidence="8" type="ordered locus">At1g76800</name>
    <name evidence="9" type="ORF">F28O16.17</name>
</gene>
<name>VITH2_ARATH</name>
<protein>
    <recommendedName>
        <fullName evidence="7">Vacuolar iron transporter homolog 2</fullName>
    </recommendedName>
    <alternativeName>
        <fullName evidence="5">Protein NODULIN-LIKE 2</fullName>
    </alternativeName>
    <alternativeName>
        <fullName evidence="6">Vacuolar iron transporter-like 2</fullName>
        <shortName evidence="6">AtVTL2</shortName>
    </alternativeName>
</protein>
<comment type="function">
    <text evidence="4">Vacuolar iron transporter involved in the transfer of iron ions from the cytosol to the vacuole for intracellular iron storage (PubMed:25360591). Involved in regulation of cellular iron homeostasis (PubMed:25360591). Vacuolar iron storage is required for seed embryo and seedling development (PubMed:25360591).</text>
</comment>
<comment type="catalytic activity">
    <reaction evidence="4">
        <text>Fe(2+)(in) = Fe(2+)(out)</text>
        <dbReference type="Rhea" id="RHEA:28486"/>
        <dbReference type="ChEBI" id="CHEBI:29033"/>
    </reaction>
    <physiologicalReaction direction="left-to-right" evidence="7">
        <dbReference type="Rhea" id="RHEA:28487"/>
    </physiologicalReaction>
</comment>
<comment type="subcellular location">
    <subcellularLocation>
        <location evidence="4">Vacuole membrane</location>
        <topology evidence="1">Multi-pass membrane protein</topology>
    </subcellularLocation>
</comment>
<comment type="tissue specificity">
    <text evidence="2">Expressed in roots, leaves and inflorescences.</text>
</comment>
<comment type="induction">
    <text evidence="3 4">Down-regulated under iron deficiency (PubMed:21411332, PubMed:25360591). Induced by iron supply (PubMed:25360591).</text>
</comment>
<comment type="miscellaneous">
    <text evidence="4">Can mediate sequestration of iron ions into vacuoles when expressed in the yeast ccc1 mutant.</text>
</comment>
<comment type="similarity">
    <text evidence="7">Belongs to the CCC1 family.</text>
</comment>
<organism>
    <name type="scientific">Arabidopsis thaliana</name>
    <name type="common">Mouse-ear cress</name>
    <dbReference type="NCBI Taxonomy" id="3702"/>
    <lineage>
        <taxon>Eukaryota</taxon>
        <taxon>Viridiplantae</taxon>
        <taxon>Streptophyta</taxon>
        <taxon>Embryophyta</taxon>
        <taxon>Tracheophyta</taxon>
        <taxon>Spermatophyta</taxon>
        <taxon>Magnoliopsida</taxon>
        <taxon>eudicotyledons</taxon>
        <taxon>Gunneridae</taxon>
        <taxon>Pentapetalae</taxon>
        <taxon>rosids</taxon>
        <taxon>malvids</taxon>
        <taxon>Brassicales</taxon>
        <taxon>Brassicaceae</taxon>
        <taxon>Camelineae</taxon>
        <taxon>Arabidopsis</taxon>
    </lineage>
</organism>
<reference key="1">
    <citation type="journal article" date="2000" name="Nature">
        <title>Sequence and analysis of chromosome 1 of the plant Arabidopsis thaliana.</title>
        <authorList>
            <person name="Theologis A."/>
            <person name="Ecker J.R."/>
            <person name="Palm C.J."/>
            <person name="Federspiel N.A."/>
            <person name="Kaul S."/>
            <person name="White O."/>
            <person name="Alonso J."/>
            <person name="Altafi H."/>
            <person name="Araujo R."/>
            <person name="Bowman C.L."/>
            <person name="Brooks S.Y."/>
            <person name="Buehler E."/>
            <person name="Chan A."/>
            <person name="Chao Q."/>
            <person name="Chen H."/>
            <person name="Cheuk R.F."/>
            <person name="Chin C.W."/>
            <person name="Chung M.K."/>
            <person name="Conn L."/>
            <person name="Conway A.B."/>
            <person name="Conway A.R."/>
            <person name="Creasy T.H."/>
            <person name="Dewar K."/>
            <person name="Dunn P."/>
            <person name="Etgu P."/>
            <person name="Feldblyum T.V."/>
            <person name="Feng J.-D."/>
            <person name="Fong B."/>
            <person name="Fujii C.Y."/>
            <person name="Gill J.E."/>
            <person name="Goldsmith A.D."/>
            <person name="Haas B."/>
            <person name="Hansen N.F."/>
            <person name="Hughes B."/>
            <person name="Huizar L."/>
            <person name="Hunter J.L."/>
            <person name="Jenkins J."/>
            <person name="Johnson-Hopson C."/>
            <person name="Khan S."/>
            <person name="Khaykin E."/>
            <person name="Kim C.J."/>
            <person name="Koo H.L."/>
            <person name="Kremenetskaia I."/>
            <person name="Kurtz D.B."/>
            <person name="Kwan A."/>
            <person name="Lam B."/>
            <person name="Langin-Hooper S."/>
            <person name="Lee A."/>
            <person name="Lee J.M."/>
            <person name="Lenz C.A."/>
            <person name="Li J.H."/>
            <person name="Li Y.-P."/>
            <person name="Lin X."/>
            <person name="Liu S.X."/>
            <person name="Liu Z.A."/>
            <person name="Luros J.S."/>
            <person name="Maiti R."/>
            <person name="Marziali A."/>
            <person name="Militscher J."/>
            <person name="Miranda M."/>
            <person name="Nguyen M."/>
            <person name="Nierman W.C."/>
            <person name="Osborne B.I."/>
            <person name="Pai G."/>
            <person name="Peterson J."/>
            <person name="Pham P.K."/>
            <person name="Rizzo M."/>
            <person name="Rooney T."/>
            <person name="Rowley D."/>
            <person name="Sakano H."/>
            <person name="Salzberg S.L."/>
            <person name="Schwartz J.R."/>
            <person name="Shinn P."/>
            <person name="Southwick A.M."/>
            <person name="Sun H."/>
            <person name="Tallon L.J."/>
            <person name="Tambunga G."/>
            <person name="Toriumi M.J."/>
            <person name="Town C.D."/>
            <person name="Utterback T."/>
            <person name="Van Aken S."/>
            <person name="Vaysberg M."/>
            <person name="Vysotskaia V.S."/>
            <person name="Walker M."/>
            <person name="Wu D."/>
            <person name="Yu G."/>
            <person name="Fraser C.M."/>
            <person name="Venter J.C."/>
            <person name="Davis R.W."/>
        </authorList>
    </citation>
    <scope>NUCLEOTIDE SEQUENCE [LARGE SCALE GENOMIC DNA]</scope>
    <source>
        <strain>cv. Columbia</strain>
    </source>
</reference>
<reference key="2">
    <citation type="journal article" date="2017" name="Plant J.">
        <title>Araport11: a complete reannotation of the Arabidopsis thaliana reference genome.</title>
        <authorList>
            <person name="Cheng C.Y."/>
            <person name="Krishnakumar V."/>
            <person name="Chan A.P."/>
            <person name="Thibaud-Nissen F."/>
            <person name="Schobel S."/>
            <person name="Town C.D."/>
        </authorList>
    </citation>
    <scope>GENOME REANNOTATION</scope>
    <source>
        <strain>cv. Columbia</strain>
    </source>
</reference>
<reference key="3">
    <citation type="submission" date="2004-06" db="EMBL/GenBank/DDBJ databases">
        <title>Arabidopsis ORF clones.</title>
        <authorList>
            <person name="Cheuk R.F."/>
            <person name="Chen H."/>
            <person name="Kim C.J."/>
            <person name="Shinn P."/>
            <person name="Ecker J.R."/>
        </authorList>
    </citation>
    <scope>NUCLEOTIDE SEQUENCE [LARGE SCALE MRNA]</scope>
    <source>
        <strain>cv. Columbia</strain>
    </source>
</reference>
<reference key="4">
    <citation type="submission" date="2004-09" db="EMBL/GenBank/DDBJ databases">
        <title>Arabidopsis ORF clones.</title>
        <authorList>
            <person name="Kim C.J."/>
            <person name="Chen H."/>
            <person name="Cheuk R.F."/>
            <person name="Shinn P."/>
            <person name="Ecker J.R."/>
        </authorList>
    </citation>
    <scope>NUCLEOTIDE SEQUENCE [LARGE SCALE MRNA]</scope>
    <source>
        <strain>cv. Columbia</strain>
    </source>
</reference>
<reference key="5">
    <citation type="journal article" date="2006" name="Genetics">
        <title>An Arabidopsis basic helix-loop-helix leucine zipper protein modulates metal homeostasis and auxin conjugate responsiveness.</title>
        <authorList>
            <person name="Rampey R.A."/>
            <person name="Woodward A.W."/>
            <person name="Hobbs B.N."/>
            <person name="Tierney M.P."/>
            <person name="Lahner B."/>
            <person name="Salt D.E."/>
            <person name="Bartel B."/>
        </authorList>
    </citation>
    <scope>TISSUE SPECIFICITY</scope>
</reference>
<reference key="6">
    <citation type="journal article" date="2011" name="Plant Physiol. Biochem.">
        <title>Members of a small family of nodulin-like genes are regulated under iron deficiency in roots of Arabidopsis thaliana.</title>
        <authorList>
            <person name="Gollhofer J."/>
            <person name="Schlaewicke C."/>
            <person name="Jungnick N."/>
            <person name="Schmidt W."/>
            <person name="Buckhout T.J."/>
        </authorList>
    </citation>
    <scope>INDUCTION</scope>
</reference>
<reference key="7">
    <citation type="journal article" date="2014" name="PLoS ONE">
        <title>Vacuolar-Iron-Transporter1-Like proteins mediate iron homeostasis in Arabidopsis.</title>
        <authorList>
            <person name="Gollhofer J."/>
            <person name="Timofeev R."/>
            <person name="Lan P."/>
            <person name="Schmidt W."/>
            <person name="Buckhout T.J."/>
        </authorList>
    </citation>
    <scope>FUNCTION</scope>
    <scope>TRANSPORTER ACTIVITY</scope>
    <scope>SUBCELLULAR LOCATION</scope>
    <scope>INDUCTION</scope>
</reference>
<accession>Q9SRD3</accession>
<feature type="chain" id="PRO_0000411008" description="Vacuolar iron transporter homolog 2">
    <location>
        <begin position="1"/>
        <end position="196"/>
    </location>
</feature>
<feature type="topological domain" description="Cytoplasmic" evidence="1">
    <location>
        <begin position="1"/>
        <end position="31"/>
    </location>
</feature>
<feature type="transmembrane region" description="Helical" evidence="1">
    <location>
        <begin position="32"/>
        <end position="52"/>
    </location>
</feature>
<feature type="topological domain" description="Vacuolar" evidence="1">
    <location>
        <begin position="53"/>
        <end position="59"/>
    </location>
</feature>
<feature type="transmembrane region" description="Helical" evidence="1">
    <location>
        <begin position="60"/>
        <end position="80"/>
    </location>
</feature>
<feature type="topological domain" description="Cytoplasmic" evidence="1">
    <location>
        <begin position="81"/>
        <end position="112"/>
    </location>
</feature>
<feature type="transmembrane region" description="Helical" evidence="1">
    <location>
        <begin position="113"/>
        <end position="133"/>
    </location>
</feature>
<feature type="topological domain" description="Vacuolar" evidence="1">
    <location>
        <begin position="134"/>
        <end position="139"/>
    </location>
</feature>
<feature type="transmembrane region" description="Helical" evidence="1">
    <location>
        <begin position="140"/>
        <end position="160"/>
    </location>
</feature>
<feature type="topological domain" description="Cytoplasmic" evidence="1">
    <location>
        <begin position="161"/>
        <end position="172"/>
    </location>
</feature>
<feature type="transmembrane region" description="Helical" evidence="1">
    <location>
        <begin position="173"/>
        <end position="193"/>
    </location>
</feature>
<feature type="topological domain" description="Vacuolar" evidence="1">
    <location>
        <begin position="194"/>
        <end position="196"/>
    </location>
</feature>
<sequence>MDQSGSNTNMDIEKESTTFDYSKRSQWLRAAVLGANDGLVSTASLMMGVGAVKHDVKAMILSGFAGMVAGACSMAIGEFVSVYSQYDIEVAQMERDSVEIEKEKLPSPMQAAAASALAFSAGAIVPLLAAAFVKEYKMRIISVVVAVTVALMVFGWLGAALGKAPAVRSSARVLFGGWLAMAVTFGLTKLIGLYGL</sequence>
<proteinExistence type="evidence at transcript level"/>